<organism>
    <name type="scientific">Geobacillus kaustophilus (strain HTA426)</name>
    <dbReference type="NCBI Taxonomy" id="235909"/>
    <lineage>
        <taxon>Bacteria</taxon>
        <taxon>Bacillati</taxon>
        <taxon>Bacillota</taxon>
        <taxon>Bacilli</taxon>
        <taxon>Bacillales</taxon>
        <taxon>Anoxybacillaceae</taxon>
        <taxon>Geobacillus</taxon>
        <taxon>Geobacillus thermoleovorans group</taxon>
    </lineage>
</organism>
<gene>
    <name evidence="1" type="primary">rbsA</name>
    <name type="ordered locus">GK3228</name>
</gene>
<evidence type="ECO:0000255" key="1">
    <source>
        <dbReference type="HAMAP-Rule" id="MF_01716"/>
    </source>
</evidence>
<comment type="function">
    <text evidence="1">Part of the ABC transporter complex RbsABC involved in ribose import. Responsible for energy coupling to the transport system.</text>
</comment>
<comment type="catalytic activity">
    <reaction evidence="1">
        <text>D-ribose(out) + ATP + H2O = D-ribose(in) + ADP + phosphate + H(+)</text>
        <dbReference type="Rhea" id="RHEA:29903"/>
        <dbReference type="ChEBI" id="CHEBI:15377"/>
        <dbReference type="ChEBI" id="CHEBI:15378"/>
        <dbReference type="ChEBI" id="CHEBI:30616"/>
        <dbReference type="ChEBI" id="CHEBI:43474"/>
        <dbReference type="ChEBI" id="CHEBI:47013"/>
        <dbReference type="ChEBI" id="CHEBI:456216"/>
        <dbReference type="EC" id="7.5.2.7"/>
    </reaction>
</comment>
<comment type="subunit">
    <text evidence="1">The complex is composed of an ATP-binding protein (RbsA), two transmembrane proteins (RbsC) and a solute-binding protein (RbsB).</text>
</comment>
<comment type="subcellular location">
    <subcellularLocation>
        <location evidence="1">Cell membrane</location>
        <topology evidence="1">Peripheral membrane protein</topology>
    </subcellularLocation>
</comment>
<comment type="similarity">
    <text evidence="1">Belongs to the ABC transporter superfamily. Ribose importer (TC 3.A.1.2.1) family.</text>
</comment>
<protein>
    <recommendedName>
        <fullName evidence="1">Ribose import ATP-binding protein RbsA</fullName>
        <ecNumber evidence="1">7.5.2.7</ecNumber>
    </recommendedName>
</protein>
<feature type="chain" id="PRO_0000261068" description="Ribose import ATP-binding protein RbsA">
    <location>
        <begin position="1"/>
        <end position="494"/>
    </location>
</feature>
<feature type="domain" description="ABC transporter 1" evidence="1">
    <location>
        <begin position="2"/>
        <end position="239"/>
    </location>
</feature>
<feature type="domain" description="ABC transporter 2" evidence="1">
    <location>
        <begin position="251"/>
        <end position="493"/>
    </location>
</feature>
<feature type="binding site" evidence="1">
    <location>
        <begin position="34"/>
        <end position="41"/>
    </location>
    <ligand>
        <name>ATP</name>
        <dbReference type="ChEBI" id="CHEBI:30616"/>
    </ligand>
</feature>
<sequence length="494" mass="54795">MIDMRSIQKSFGANIVLNGVDFEVLPGEVHALMGENGAGKSTLIKVLTGIYERDGGTIVVNGREVHYRHPKEAERDGIVVIHQELNVIPTLTVAENIFLGREPKIGRTGVIRYKEMEQQAASYLRRLGMDLDPRELAGRLSVGKQQMIEIARAISTNAKCLIMDEPTAALTEREIQALFSVIPTLKQQGVAVVYISHRMEEIFTICDRISVLRDGQFIGTKRVKETNFDEIVQMMVGRQIGERFPKRRVTIGEERLRVERLTKKGLFENVSFSVRAGEVLGVAGLMGSGRTEIMEAIFGARPFDEGDIYIDGRPVRIRSPRQAVEHGIAMITEDRKQKGLILEMSVHENLTLPKLEQLATAGFIQSSKERDVVLTYIHLLNIKASSPDLPVKALSGGNQQKVVFGKWLAMNPRILILDEPTRGVDVGAKKEIYEVINELAAQGAAIIMISSELPEVLGMSDRVMVVHEGKVQAILENDGLDQETIMRAATGGNR</sequence>
<dbReference type="EC" id="7.5.2.7" evidence="1"/>
<dbReference type="EMBL" id="BA000043">
    <property type="protein sequence ID" value="BAD77513.1"/>
    <property type="molecule type" value="Genomic_DNA"/>
</dbReference>
<dbReference type="SMR" id="Q5KUX3"/>
<dbReference type="STRING" id="235909.GK3228"/>
<dbReference type="KEGG" id="gka:GK3228"/>
<dbReference type="eggNOG" id="COG1129">
    <property type="taxonomic scope" value="Bacteria"/>
</dbReference>
<dbReference type="HOGENOM" id="CLU_000604_92_3_9"/>
<dbReference type="Proteomes" id="UP000001172">
    <property type="component" value="Chromosome"/>
</dbReference>
<dbReference type="GO" id="GO:0005886">
    <property type="term" value="C:plasma membrane"/>
    <property type="evidence" value="ECO:0007669"/>
    <property type="project" value="UniProtKB-SubCell"/>
</dbReference>
<dbReference type="GO" id="GO:0015611">
    <property type="term" value="F:ABC-type D-ribose transporter activity"/>
    <property type="evidence" value="ECO:0007669"/>
    <property type="project" value="UniProtKB-EC"/>
</dbReference>
<dbReference type="GO" id="GO:0005524">
    <property type="term" value="F:ATP binding"/>
    <property type="evidence" value="ECO:0007669"/>
    <property type="project" value="UniProtKB-KW"/>
</dbReference>
<dbReference type="GO" id="GO:0016887">
    <property type="term" value="F:ATP hydrolysis activity"/>
    <property type="evidence" value="ECO:0007669"/>
    <property type="project" value="InterPro"/>
</dbReference>
<dbReference type="CDD" id="cd03216">
    <property type="entry name" value="ABC_Carb_Monos_I"/>
    <property type="match status" value="1"/>
</dbReference>
<dbReference type="CDD" id="cd03215">
    <property type="entry name" value="ABC_Carb_Monos_II"/>
    <property type="match status" value="1"/>
</dbReference>
<dbReference type="FunFam" id="3.40.50.300:FF:000126">
    <property type="entry name" value="Galactose/methyl galactoside import ATP-binding protein MglA"/>
    <property type="match status" value="1"/>
</dbReference>
<dbReference type="FunFam" id="3.40.50.300:FF:000127">
    <property type="entry name" value="Ribose import ATP-binding protein RbsA"/>
    <property type="match status" value="1"/>
</dbReference>
<dbReference type="Gene3D" id="3.40.50.300">
    <property type="entry name" value="P-loop containing nucleotide triphosphate hydrolases"/>
    <property type="match status" value="2"/>
</dbReference>
<dbReference type="InterPro" id="IPR003593">
    <property type="entry name" value="AAA+_ATPase"/>
</dbReference>
<dbReference type="InterPro" id="IPR050107">
    <property type="entry name" value="ABC_carbohydrate_import_ATPase"/>
</dbReference>
<dbReference type="InterPro" id="IPR003439">
    <property type="entry name" value="ABC_transporter-like_ATP-bd"/>
</dbReference>
<dbReference type="InterPro" id="IPR017871">
    <property type="entry name" value="ABC_transporter-like_CS"/>
</dbReference>
<dbReference type="InterPro" id="IPR027417">
    <property type="entry name" value="P-loop_NTPase"/>
</dbReference>
<dbReference type="PANTHER" id="PTHR43790">
    <property type="entry name" value="CARBOHYDRATE TRANSPORT ATP-BINDING PROTEIN MG119-RELATED"/>
    <property type="match status" value="1"/>
</dbReference>
<dbReference type="PANTHER" id="PTHR43790:SF3">
    <property type="entry name" value="D-ALLOSE IMPORT ATP-BINDING PROTEIN ALSA-RELATED"/>
    <property type="match status" value="1"/>
</dbReference>
<dbReference type="Pfam" id="PF00005">
    <property type="entry name" value="ABC_tran"/>
    <property type="match status" value="2"/>
</dbReference>
<dbReference type="SMART" id="SM00382">
    <property type="entry name" value="AAA"/>
    <property type="match status" value="2"/>
</dbReference>
<dbReference type="SUPFAM" id="SSF52540">
    <property type="entry name" value="P-loop containing nucleoside triphosphate hydrolases"/>
    <property type="match status" value="2"/>
</dbReference>
<dbReference type="PROSITE" id="PS00211">
    <property type="entry name" value="ABC_TRANSPORTER_1"/>
    <property type="match status" value="1"/>
</dbReference>
<dbReference type="PROSITE" id="PS50893">
    <property type="entry name" value="ABC_TRANSPORTER_2"/>
    <property type="match status" value="2"/>
</dbReference>
<dbReference type="PROSITE" id="PS51254">
    <property type="entry name" value="RBSA"/>
    <property type="match status" value="1"/>
</dbReference>
<proteinExistence type="inferred from homology"/>
<name>RBSA_GEOKA</name>
<keyword id="KW-0067">ATP-binding</keyword>
<keyword id="KW-1003">Cell membrane</keyword>
<keyword id="KW-0472">Membrane</keyword>
<keyword id="KW-0547">Nucleotide-binding</keyword>
<keyword id="KW-1185">Reference proteome</keyword>
<keyword id="KW-0677">Repeat</keyword>
<keyword id="KW-0762">Sugar transport</keyword>
<keyword id="KW-1278">Translocase</keyword>
<keyword id="KW-0813">Transport</keyword>
<reference key="1">
    <citation type="journal article" date="2004" name="Nucleic Acids Res.">
        <title>Thermoadaptation trait revealed by the genome sequence of thermophilic Geobacillus kaustophilus.</title>
        <authorList>
            <person name="Takami H."/>
            <person name="Takaki Y."/>
            <person name="Chee G.-J."/>
            <person name="Nishi S."/>
            <person name="Shimamura S."/>
            <person name="Suzuki H."/>
            <person name="Matsui S."/>
            <person name="Uchiyama I."/>
        </authorList>
    </citation>
    <scope>NUCLEOTIDE SEQUENCE [LARGE SCALE GENOMIC DNA]</scope>
    <source>
        <strain>HTA426</strain>
    </source>
</reference>
<accession>Q5KUX3</accession>